<dbReference type="EMBL" id="DQ239610">
    <property type="protein sequence ID" value="ABB55879.1"/>
    <property type="molecule type" value="Genomic_DNA"/>
</dbReference>
<dbReference type="PDB" id="2JUQ">
    <property type="method" value="NMR"/>
    <property type="chains" value="A=20-32"/>
</dbReference>
<dbReference type="PDB" id="2JUR">
    <property type="method" value="NMR"/>
    <property type="chains" value="A=20-32"/>
</dbReference>
<dbReference type="PDB" id="2JUS">
    <property type="method" value="NMR"/>
    <property type="chains" value="A=20-32"/>
</dbReference>
<dbReference type="PDB" id="2JUT">
    <property type="method" value="NMR"/>
    <property type="chains" value="A=20-32"/>
</dbReference>
<dbReference type="PDB" id="2MTO">
    <property type="method" value="NMR"/>
    <property type="chains" value="A=20-32"/>
</dbReference>
<dbReference type="PDB" id="2MTT">
    <property type="method" value="NMR"/>
    <property type="chains" value="A=20-30"/>
</dbReference>
<dbReference type="PDB" id="6HY7">
    <property type="method" value="X-ray"/>
    <property type="resolution" value="2.26 A"/>
    <property type="chains" value="B=20-32"/>
</dbReference>
<dbReference type="PDB" id="7EGR">
    <property type="method" value="X-ray"/>
    <property type="resolution" value="2.50 A"/>
    <property type="chains" value="K/L/M/N/O/P/Q/R=20-32"/>
</dbReference>
<dbReference type="PDB" id="8W16">
    <property type="method" value="NMR"/>
    <property type="chains" value="A=19-32"/>
</dbReference>
<dbReference type="PDB" id="8W17">
    <property type="method" value="NMR"/>
    <property type="chains" value="A=19-32"/>
</dbReference>
<dbReference type="PDBsum" id="2JUQ"/>
<dbReference type="PDBsum" id="2JUR"/>
<dbReference type="PDBsum" id="2JUS"/>
<dbReference type="PDBsum" id="2JUT"/>
<dbReference type="PDBsum" id="2MTO"/>
<dbReference type="PDBsum" id="2MTT"/>
<dbReference type="PDBsum" id="6HY7"/>
<dbReference type="PDBsum" id="7EGR"/>
<dbReference type="PDBsum" id="8W16"/>
<dbReference type="PDBsum" id="8W17"/>
<dbReference type="SMR" id="P0C1D0"/>
<dbReference type="ConoServer" id="593">
    <property type="toxin name" value="RgIA precursor"/>
</dbReference>
<dbReference type="EvolutionaryTrace" id="P0C1D0"/>
<dbReference type="GO" id="GO:0005576">
    <property type="term" value="C:extracellular region"/>
    <property type="evidence" value="ECO:0007669"/>
    <property type="project" value="UniProtKB-SubCell"/>
</dbReference>
<dbReference type="GO" id="GO:0035792">
    <property type="term" value="C:host cell postsynaptic membrane"/>
    <property type="evidence" value="ECO:0007669"/>
    <property type="project" value="UniProtKB-KW"/>
</dbReference>
<dbReference type="GO" id="GO:0030550">
    <property type="term" value="F:acetylcholine receptor inhibitor activity"/>
    <property type="evidence" value="ECO:0007669"/>
    <property type="project" value="UniProtKB-KW"/>
</dbReference>
<dbReference type="GO" id="GO:0099106">
    <property type="term" value="F:ion channel regulator activity"/>
    <property type="evidence" value="ECO:0007669"/>
    <property type="project" value="UniProtKB-KW"/>
</dbReference>
<dbReference type="GO" id="GO:0090729">
    <property type="term" value="F:toxin activity"/>
    <property type="evidence" value="ECO:0007669"/>
    <property type="project" value="UniProtKB-KW"/>
</dbReference>
<dbReference type="InterPro" id="IPR018072">
    <property type="entry name" value="Conotoxin_a-typ_CS"/>
</dbReference>
<dbReference type="PROSITE" id="PS60014">
    <property type="entry name" value="ALPHA_CONOTOXIN"/>
    <property type="match status" value="1"/>
</dbReference>
<protein>
    <recommendedName>
        <fullName evidence="13 14">Alpha-conotoxin RgIA</fullName>
    </recommendedName>
</protein>
<organism>
    <name type="scientific">Conus regius</name>
    <name type="common">Crown cone</name>
    <dbReference type="NCBI Taxonomy" id="101314"/>
    <lineage>
        <taxon>Eukaryota</taxon>
        <taxon>Metazoa</taxon>
        <taxon>Spiralia</taxon>
        <taxon>Lophotrochozoa</taxon>
        <taxon>Mollusca</taxon>
        <taxon>Gastropoda</taxon>
        <taxon>Caenogastropoda</taxon>
        <taxon>Neogastropoda</taxon>
        <taxon>Conoidea</taxon>
        <taxon>Conidae</taxon>
        <taxon>Conus</taxon>
        <taxon>Stephanoconus</taxon>
    </lineage>
</organism>
<reference key="1">
    <citation type="journal article" date="2006" name="Biochemistry">
        <title>Alpha-RgIA: a novel conotoxin that specifically and potently blocks the alpha9alpha10 nAChR.</title>
        <authorList>
            <person name="Ellison M."/>
            <person name="Haberlandt C."/>
            <person name="Gomez-Casati M.E."/>
            <person name="Watkins M."/>
            <person name="Elgoyhen A.B."/>
            <person name="McIntosh J.M."/>
            <person name="Olivera B.M."/>
        </authorList>
    </citation>
    <scope>NUCLEOTIDE SEQUENCE [GENOMIC DNA]</scope>
    <scope>SYNTHESIS OF 20-32</scope>
    <scope>FUNCTION</scope>
    <source>
        <tissue>Hepatopancreas</tissue>
    </source>
</reference>
<reference key="2">
    <citation type="journal article" date="2006" name="Proc. Natl. Acad. Sci. U.S.A.">
        <title>Molecular mechanism for analgesia involving specific antagonism of alpha9alpha10 nicotinic acetylcholine receptors.</title>
        <authorList>
            <person name="Vincler M."/>
            <person name="Wittenauer S."/>
            <person name="Parker R."/>
            <person name="Ellison M."/>
            <person name="Olivera B.M."/>
            <person name="McIntosh J.M."/>
        </authorList>
    </citation>
    <scope>FUNCTION</scope>
    <scope>BIOASSAY</scope>
</reference>
<reference key="3">
    <citation type="journal article" date="2008" name="J. Neurosci.">
        <title>Analgesic alpha-conotoxins Vc1.1 and Rg1A inhibit N-type calcium channels in rat sensory neurons via GABAB receptor activation.</title>
        <authorList>
            <person name="Callaghan B."/>
            <person name="Haythornthwaite A."/>
            <person name="Berecki G."/>
            <person name="Clark R.J."/>
            <person name="Craik D.J."/>
            <person name="Adams D.J."/>
        </authorList>
    </citation>
    <scope>FUNCTION ON GABA(B) RECEPTOR</scope>
    <scope>SYNTHESIS OF 20-32</scope>
</reference>
<reference key="4">
    <citation type="journal article" date="2011" name="J. Med. Chem.">
        <title>Effects of cyclization on stability, structure, and activity of alpha-conotoxin RgIA at the alpha9alpha10 nicotinic acetylcholine receptor and GABA(B) receptor.</title>
        <authorList>
            <person name="Halai R."/>
            <person name="Callaghan B."/>
            <person name="Daly N.L."/>
            <person name="Clark R.J."/>
            <person name="Adams D.J."/>
            <person name="Craik D.J."/>
        </authorList>
    </citation>
    <scope>FUNCTION</scope>
    <scope>MUTAGENESIS OF ARG-32</scope>
    <scope>SYNTHESIS OF 20-32</scope>
    <scope>SYNTHESIS OF CYCLIC ANALOGS</scope>
</reference>
<reference key="5">
    <citation type="journal article" date="2012" name="J. Neurochem.">
        <title>Molecular basis for the differential sensitivity of rat and human alpha9alpha10 nAChRs to alpha-conotoxin RgIA.</title>
        <authorList>
            <person name="Azam L."/>
            <person name="McIntosh J.M."/>
        </authorList>
    </citation>
    <scope>FUNCTION</scope>
    <scope>SYNTHESIS OF 20-32</scope>
</reference>
<reference key="6">
    <citation type="journal article" date="2014" name="Pain">
        <title>Alpha-conotoxin RgIA protects against the development of nerve injury-induced chronic pain and prevents both neuronal and glial derangement.</title>
        <authorList>
            <person name="Di Cesare Mannelli L."/>
            <person name="Cinci L."/>
            <person name="Micheli L."/>
            <person name="Zanardelli M."/>
            <person name="Pacini A."/>
            <person name="McIntosh J.M."/>
            <person name="Ghelardini C."/>
        </authorList>
    </citation>
    <scope>BIOASSAY</scope>
    <scope>SYNTHESIS OF 20-32</scope>
</reference>
<reference key="7">
    <citation type="journal article" date="2015" name="Mol. Pharmacol.">
        <title>Molecular interaction of alpha-conotoxin RgIA with the rat alpha9alpha10 nicotinic acetylcholine receptor.</title>
        <authorList>
            <person name="Azam L."/>
            <person name="Papakyriakou A."/>
            <person name="Zouridakis M."/>
            <person name="Giastas P."/>
            <person name="Tzartos S.J."/>
            <person name="McIntosh J.M."/>
        </authorList>
    </citation>
    <scope>FUNCTION</scope>
    <scope>SITES ARG-26 AND ARG-30</scope>
    <scope>3D-STRUCTURE MODELING</scope>
    <scope>SYNTHESIS OF 20-32</scope>
</reference>
<reference key="8">
    <citation type="journal article" date="2016" name="Mol. Pharmacol.">
        <title>Corrections to 'Molecular interaction of alpha-conotoxin RgIA with the rat alpha9alpha10 nicotinic acetylcholine receptor'.</title>
        <authorList>
            <person name="Azam L."/>
            <person name="Papakyriakou A."/>
            <person name="Zouridakis M."/>
            <person name="Giastas P."/>
            <person name="Tzartos S.J."/>
            <person name="McIntosh J.M."/>
        </authorList>
    </citation>
    <scope>ERRATUM OF PUBMED:25740413</scope>
</reference>
<reference key="9">
    <citation type="journal article" date="2017" name="Proc. Natl. Acad. Sci. U.S.A.">
        <title>Inhibition of alpha9alpha10 nicotinic acetylcholine receptors prevents chemotherapy-induced neuropathic pain.</title>
        <authorList>
            <person name="Romero H.K."/>
            <person name="Christensen S.B."/>
            <person name="Di Cesare Mannelli L."/>
            <person name="Gajewiak J."/>
            <person name="Ramachandra R."/>
            <person name="Elmslie K.S."/>
            <person name="Vetter D.E."/>
            <person name="Ghelardini C."/>
            <person name="Iadonato S.P."/>
            <person name="Mercado J.L."/>
            <person name="Olivera B.M."/>
            <person name="McIntosh J.M."/>
        </authorList>
    </citation>
    <scope>MUTAGENESIS OF SER-23; ARG-28; TYR-29; ARG-30 AND ARG-32</scope>
    <scope>SYNTHESIS OF 20-32</scope>
</reference>
<reference key="10">
    <citation type="journal article" date="2020" name="J. Med. Chem.">
        <title>Dimerization of alpha-conotoxins as a strategy to enhance the inhibition of the human alpha7 and alpha9alpha10 nicotinic acetylcholine Receptors.</title>
        <authorList>
            <person name="Liang J."/>
            <person name="Tae H.S."/>
            <person name="Xu X."/>
            <person name="Jiang T."/>
            <person name="Adams D.J."/>
            <person name="Yu R."/>
        </authorList>
    </citation>
    <scope>FUNCTION</scope>
    <scope>MUTAGENESIS OF CYS-31</scope>
    <scope>BIOTECHNOLOGY</scope>
</reference>
<reference key="11">
    <citation type="journal article" date="2008" name="FEBS Lett.">
        <title>The three-dimensional structure of the analgesic alpha-conotoxin, RgIA.</title>
        <authorList>
            <person name="Clark R.J."/>
            <person name="Daly N.L."/>
            <person name="Halai R."/>
            <person name="Nevin S.T."/>
            <person name="Adams D.J."/>
            <person name="Craik D.J."/>
        </authorList>
    </citation>
    <scope>STRUCTURE BY NMR OF 20-32</scope>
    <scope>SYNTHESIS OF 20-32</scope>
    <scope>DISULFIDE BOND</scope>
</reference>
<reference key="12">
    <citation type="journal article" date="2008" name="J. Mol. Biol.">
        <title>Alpha-RgIA, a novel conotoxin that blocks the alpha9alpha10 nAChR: structure and identification of key receptor-binding residues.</title>
        <authorList>
            <person name="Ellison M."/>
            <person name="Feng Z.P."/>
            <person name="Park A.J."/>
            <person name="Zhang X."/>
            <person name="Olivera B.M."/>
            <person name="McIntosh J.M."/>
            <person name="Norton R.S."/>
        </authorList>
    </citation>
    <scope>STRUCTURE BY NMR OF 20-32</scope>
    <scope>DISULFIDE BOND</scope>
    <scope>MUTAGENESIS OF SER-23; ASP-24; PRO-25; ARG-26; ARG-28; TYR-29 AND ARG-32</scope>
    <scope>SYNTHESIS OF 20-32</scope>
</reference>
<reference key="13">
    <citation type="journal article" date="2014" name="J. Med. Chem.">
        <title>Dicarba analogues of alpha-conotoxin RgIA. Structure, stability, and activity at potential pain targets.</title>
        <authorList>
            <person name="Chhabra S."/>
            <person name="Belgi A."/>
            <person name="Bartels P."/>
            <person name="van Lierop B.J."/>
            <person name="Robinson S.D."/>
            <person name="Kompella S.N."/>
            <person name="Hung A."/>
            <person name="Callaghan B.P."/>
            <person name="Adams D.J."/>
            <person name="Robinson A.J."/>
            <person name="Norton R.S."/>
        </authorList>
    </citation>
    <scope>STRUCTURE BY NMR OF 20-32</scope>
    <scope>SYNTHESIS OF 20-32</scope>
    <scope>SYNTHESIS OF NON-REDUCIBLE ANALOGS</scope>
</reference>
<accession>P0C1D0</accession>
<accession>Q1WJB2</accession>
<feature type="propeptide" id="PRO_0000234829" evidence="1">
    <location>
        <begin position="1" status="less than"/>
        <end position="19"/>
    </location>
</feature>
<feature type="peptide" id="PRO_0000234830" description="Alpha-conotoxin RgIA" evidence="16 17 18 19 20 21 22 23 24">
    <location>
        <begin position="20"/>
        <end position="32"/>
    </location>
</feature>
<feature type="site" description="Key residue for potent inhibition of the rat CHRNA9-CHRNA10 nAChR" evidence="5">
    <location>
        <position position="24"/>
    </location>
</feature>
<feature type="site" description="Key residue for potent inhibition of the rat CHRNA9-CHRNA10 nAChR" evidence="5">
    <location>
        <position position="25"/>
    </location>
</feature>
<feature type="site" description="Binds to the Pro-224 and Asp-225 of the rat nAChR CHRNA10 subunit" evidence="24">
    <location>
        <position position="26"/>
    </location>
</feature>
<feature type="site" description="Key residue for potent inhibition of the rat CHRNA9-CHRNA10 nAChR" evidence="5">
    <location>
        <position position="26"/>
    </location>
</feature>
<feature type="site" description="Key residue for potent inhibition of the rat CHRNA9-CHRNA10 nAChR" evidence="5">
    <location>
        <position position="28"/>
    </location>
</feature>
<feature type="site" description="Binds to the Glu-221 of the rat nAChR CHRNA10 subunit" evidence="24">
    <location>
        <position position="30"/>
    </location>
</feature>
<feature type="disulfide bond" evidence="4 5 26 27 28 29">
    <location>
        <begin position="21"/>
        <end position="27"/>
    </location>
</feature>
<feature type="disulfide bond" evidence="4 5 26 27 28 29">
    <location>
        <begin position="22"/>
        <end position="31"/>
    </location>
</feature>
<feature type="mutagenesis site" description="1.7-fold less potent to inhibit both rat CHRNA9-CHRNA10 and CHRNA7 nAChR." evidence="5">
    <original>S</original>
    <variation>A</variation>
    <location>
        <position position="23"/>
    </location>
</feature>
<feature type="mutagenesis site" description="Extremely important increase in potency on human CHRNA9-CHRNA10 nAChR." evidence="12">
    <original>S</original>
    <variation>T</variation>
    <location>
        <position position="23"/>
    </location>
</feature>
<feature type="mutagenesis site" description="783-fold and 8.3-fold less potent to inhibit rat CHRNA9-CHRNA10 and CHRNA7 nAChR, respectively." evidence="5">
    <original>D</original>
    <variation>E</variation>
    <location>
        <position position="24"/>
    </location>
</feature>
<feature type="mutagenesis site" description="480-fold and 5.8-fold less potent to inhibit rat CHRNA9-CHRNA10 and CHRNA7 nAChR, respectively." evidence="5">
    <original>P</original>
    <variation>V</variation>
    <location>
        <position position="25"/>
    </location>
</feature>
<feature type="mutagenesis site" description="1523-fold and 14.2-fold less potent to inhibit rat CHRNA9-CHRNA10 and CHRNA7 nAChR, respectively." evidence="5">
    <original>R</original>
    <variation>K</variation>
    <location>
        <position position="26"/>
    </location>
</feature>
<feature type="mutagenesis site" description="1511-fold less potent to inhibit the rat CHRNA9-CHRNA10 nAChR and 5.8-fold more potent to inhibit the rat CHRNA7 nAChR." evidence="5">
    <original>R</original>
    <variation>A</variation>
    <location>
        <position position="28"/>
    </location>
</feature>
<feature type="mutagenesis site" description="No significant change in potency on human CHRNA9-CHRNA10 nAChR." evidence="12">
    <original>R</original>
    <variation>K</variation>
    <location>
        <position position="28"/>
    </location>
</feature>
<feature type="mutagenesis site" description="1.3-fold less potent to inhibit the rat CHRNA9-CHRNA10 nAChR and 1.1-fold more potent to inhibit the rat CHRNA7 nAChR." evidence="5">
    <original>Y</original>
    <variation>W</variation>
    <location>
        <position position="29"/>
    </location>
</feature>
<feature type="mutagenesis site" description="Relatively important increase in potency on human CHRNA9-CHRNA10 nAChR." evidence="12">
    <original>Y</original>
    <variation>W</variation>
    <location>
        <position position="29"/>
    </location>
</feature>
<feature type="mutagenesis site" description="Extremely important increase in potency on human CHRNA9-CHRNA10 nAChR." evidence="12">
    <original>R</original>
    <variation>Q</variation>
    <location>
        <position position="30"/>
    </location>
</feature>
<feature type="mutagenesis site" description="RgIA[Del13]dimer; Important increase of activity and specificity on both alpha-9-alpha-10/CHRNA9-CHRNA10 and alpha-7/CHRNA7 nAChRs.">
    <original>C</original>
    <variation>CGRRRRGGCCSDPRCRYRC</variation>
    <location>
        <position position="31"/>
    </location>
</feature>
<feature type="mutagenesis site" description="With cyclization, improvement in the stability, small increase in inhibition of human CHRNA9/rat CHRNA10 nAChR and no change in GABA(B)/N-type calcium channels (cRgIA-7)." evidence="7">
    <original>R</original>
    <variation>GGAAGAG</variation>
    <location>
        <position position="32"/>
    </location>
</feature>
<feature type="mutagenesis site" description="No significant change in potency on human CHRNA9-CHRNA10 nAChR." evidence="12">
    <original>R</original>
    <variation>K</variation>
    <location>
        <position position="32"/>
    </location>
</feature>
<feature type="mutagenesis site" description="No significant change in potency on human CHRNA9-CHRNA10 nAChR." evidence="12">
    <original>R</original>
    <variation>Q</variation>
    <location>
        <position position="32"/>
    </location>
</feature>
<feature type="mutagenesis site" description="Extremely important increase in potency on human CHRNA9-CHRNA10 nAChR." evidence="12">
    <original>R</original>
    <variation>Y</variation>
    <location>
        <position position="32"/>
    </location>
</feature>
<feature type="mutagenesis site" description="RgIA# with amidated C-31; no change in activity on rat CHRNA9-CHRNA10 nAChR and 2.8-fold increase in potency to inhibit rat CHRNA7 nAChR. No change in inhibition of human-CHRNA9/rat-CHRNA10 nAChR and increase in inhibition of GABA(B)/N-type calcium channels (RgIA[delR])." evidence="5 7">
    <location>
        <position position="32"/>
    </location>
</feature>
<feature type="non-terminal residue" evidence="16">
    <location>
        <position position="1"/>
    </location>
</feature>
<feature type="helix" evidence="30">
    <location>
        <begin position="21"/>
        <end position="23"/>
    </location>
</feature>
<feature type="turn" evidence="31">
    <location>
        <begin position="25"/>
        <end position="27"/>
    </location>
</feature>
<feature type="helix" evidence="31">
    <location>
        <begin position="28"/>
        <end position="31"/>
    </location>
</feature>
<evidence type="ECO:0000250" key="1"/>
<evidence type="ECO:0000269" key="2">
    <source>
    </source>
</evidence>
<evidence type="ECO:0000269" key="3">
    <source>
    </source>
</evidence>
<evidence type="ECO:0000269" key="4">
    <source>
    </source>
</evidence>
<evidence type="ECO:0000269" key="5">
    <source>
    </source>
</evidence>
<evidence type="ECO:0000269" key="6">
    <source>
    </source>
</evidence>
<evidence type="ECO:0000269" key="7">
    <source>
    </source>
</evidence>
<evidence type="ECO:0000269" key="8">
    <source>
    </source>
</evidence>
<evidence type="ECO:0000269" key="9">
    <source>
    </source>
</evidence>
<evidence type="ECO:0000269" key="10">
    <source>
    </source>
</evidence>
<evidence type="ECO:0000269" key="11">
    <source>
    </source>
</evidence>
<evidence type="ECO:0000269" key="12">
    <source>
    </source>
</evidence>
<evidence type="ECO:0000303" key="13">
    <source>
    </source>
</evidence>
<evidence type="ECO:0000303" key="14">
    <source>
    </source>
</evidence>
<evidence type="ECO:0000305" key="15"/>
<evidence type="ECO:0000305" key="16">
    <source>
    </source>
</evidence>
<evidence type="ECO:0000305" key="17">
    <source>
    </source>
</evidence>
<evidence type="ECO:0000305" key="18">
    <source>
    </source>
</evidence>
<evidence type="ECO:0000305" key="19">
    <source>
    </source>
</evidence>
<evidence type="ECO:0000305" key="20">
    <source>
    </source>
</evidence>
<evidence type="ECO:0000305" key="21">
    <source>
    </source>
</evidence>
<evidence type="ECO:0000305" key="22">
    <source>
    </source>
</evidence>
<evidence type="ECO:0000305" key="23">
    <source>
    </source>
</evidence>
<evidence type="ECO:0000305" key="24">
    <source>
    </source>
</evidence>
<evidence type="ECO:0000305" key="25">
    <source>
    </source>
</evidence>
<evidence type="ECO:0000312" key="26">
    <source>
        <dbReference type="PDB" id="2JUQ"/>
    </source>
</evidence>
<evidence type="ECO:0000312" key="27">
    <source>
        <dbReference type="PDB" id="2JUR"/>
    </source>
</evidence>
<evidence type="ECO:0000312" key="28">
    <source>
        <dbReference type="PDB" id="2JUS"/>
    </source>
</evidence>
<evidence type="ECO:0000312" key="29">
    <source>
        <dbReference type="PDB" id="2JUT"/>
    </source>
</evidence>
<evidence type="ECO:0007829" key="30">
    <source>
        <dbReference type="PDB" id="6HY7"/>
    </source>
</evidence>
<evidence type="ECO:0007829" key="31">
    <source>
        <dbReference type="PDB" id="7EGR"/>
    </source>
</evidence>
<sequence length="32" mass="3725">SNKRKNAAMLDMIAQHAIRGCCSDPRCRYRCR</sequence>
<keyword id="KW-0002">3D-structure</keyword>
<keyword id="KW-0008">Acetylcholine receptor inhibiting toxin</keyword>
<keyword id="KW-1015">Disulfide bond</keyword>
<keyword id="KW-1213">G-protein coupled receptor impairing toxin</keyword>
<keyword id="KW-0872">Ion channel impairing toxin</keyword>
<keyword id="KW-0528">Neurotoxin</keyword>
<keyword id="KW-0629">Postsynaptic neurotoxin</keyword>
<keyword id="KW-0964">Secreted</keyword>
<keyword id="KW-0800">Toxin</keyword>
<comment type="function">
    <text evidence="2 3 4 5 6 7 8 9 11 12">This toxin target two types of receptors, the nicotinic acetylcholine receptor (nAChR) and the G-protein-coupled receptor GABA(B). It specifically inhibits the alpha-9-alpha-10/CHRNA9-CHRNA10 nAChR, with preference for rat receptors (PubMed:16445293, PubMed:18242183, PubMed:18295795, PubMed:21888386, PubMed:22774872, PubMed:25740413, PubMed:28223528). It interacts with the alpha-10(+)/alpha-9(-)interface of the receptor (PubMed:25740413). It shows a two order of magnitude species difference potency for the rat versus human alpha-9-alpha-10 nAChR, due to the Thr-86 located in the alpha-9 nAChR subunit (PubMed:22774872). This toxin also shows inhibition of high voltage-activated (HVA) calcium channels (Cav2.2) by acting on GABA(B) receptors (GABBR1 and GABBR2) (PubMed:18945902, PubMed:21888386). In vivo, this toxin produces an acute antinociceptive effect in peripheral nerve-injured rats, which may be related to the inhibition of immune cell buildup at the site of nerve injury (PubMed:17101979). In addition, when intramuscularly injected into rats following chronic constriction injury of the sciatic nerve, this toxin protects peripheral nervous tissues as well as prevents central maladaptive plasticity by inhibiting glial cell activation (PubMed:25008370).</text>
</comment>
<comment type="subcellular location">
    <subcellularLocation>
        <location evidence="1">Secreted</location>
    </subcellularLocation>
</comment>
<comment type="tissue specificity">
    <text evidence="15">Expressed by the venom duct.</text>
</comment>
<comment type="domain">
    <text evidence="15">The cysteine framework is I (CC-C-C). Alpha4/3 pattern.</text>
</comment>
<comment type="PTM">
    <text evidence="10">The disulfide bond CysI-CysIII is important for alpha-9-alpha-10 subtype inhibition, whereas the bond CysII-CysIV contributes to GABA(B) modulation.</text>
</comment>
<comment type="biotechnology">
    <text evidence="25">RgIA[Del13]dimer is an analog therapeutically interesting because it is the first dual inhibitor that potently and selectively inhibits alpha-9-alpha-10/CHRNA9-CHRNA10 and alpha-7/CHRNA7 subtypes, which are both involved in the etiology of several cancers.</text>
</comment>
<comment type="miscellaneous">
    <text evidence="2 5">Negative results: this toxin shows a weak activity on alpha-7 nAChR (IC(50)=3310-4660 nM) (PubMed:16445293, PubMed:18295795). It also shows a very weak activity on alpha-2-beta-2, alpha-2-beta-4, alpha-3-beta-4, alpha-3-beta-2, alpha-4-beta-2, alpha-4-beta-4 and alpha-6/alpha-3-beta-2-beta-3 nAChRs (IC(50)&gt;10 uM) (PubMed:16445293).</text>
</comment>
<comment type="miscellaneous">
    <text evidence="12 15">The derivative RgIA4 (S23T; R28Citrulline; Y29(3-I-Y); R30Q; R32Y) has been under preclinical studies by Kineta under the name KCP-400. It was tested to prevent chronic cancer chemotherapy-induced neuropathic pain (PubMed:28223528). This studies has been discontinued (Probable).</text>
</comment>
<comment type="miscellaneous">
    <text evidence="10">The cis-[2,8]-dicarba analog is significantly more stable and less susceptible to proteolytic degradation than native RgIA.</text>
</comment>
<comment type="miscellaneous">
    <text evidence="12">Replacement of Arg-28 by a Citrulline residue strongly increases the potency on human CHRNA9-CHRNA10 nAChR. Replacement of Tyr-29 by a monoido-Tyr (3-I-Y) residue very strongly increases the potency on human CHRNA9-CHRNA10 nAChR.</text>
</comment>
<comment type="miscellaneous">
    <text evidence="12">The synthetic variant RgIA4 (S23T; R28Citrulline; Y29(3-I-Y); R30Q; R32Y) is very potent on human CHRNA9-CHRNA10 (IC(50)=1.5 nM) and the most selective among all other synthetic variants tested (IC(50)&gt;10 uM on all receptors tested, and (IC(50)=1.8 uM) on alpha-7/CHRNA9 nAChR).</text>
</comment>
<comment type="similarity">
    <text evidence="15">Belongs to the conotoxin A superfamily.</text>
</comment>
<comment type="caution">
    <text evidence="15">Has the same mature sequence than Reg1e (AC P85011). RgIA could therefore be the precursor of Reg1e, except that RgIA does not have the C-terminal Gly residue required for C-terminal amidation of Reg1e.</text>
</comment>
<proteinExistence type="evidence at protein level"/>
<name>CA1A_CONRE</name>